<reference key="1">
    <citation type="journal article" date="2002" name="Development">
        <title>Control of Drosophila imaginal disc development by rotund and roughened eye: differentially expressed transcripts of the same gene encoding functionally distinct zinc finger proteins.</title>
        <authorList>
            <person name="St Pierre S.E."/>
            <person name="Galindo M.I."/>
            <person name="Couso J.P."/>
            <person name="Thor S."/>
        </authorList>
    </citation>
    <scope>NUCLEOTIDE SEQUENCE [MRNA] (ISOFORMS RN AND ROE)</scope>
    <scope>ALTERNATIVE PROMOTER USAGE</scope>
    <scope>FUNCTION</scope>
    <scope>TISSUE SPECIFICITY</scope>
</reference>
<reference key="2">
    <citation type="journal article" date="2000" name="Science">
        <title>The genome sequence of Drosophila melanogaster.</title>
        <authorList>
            <person name="Adams M.D."/>
            <person name="Celniker S.E."/>
            <person name="Holt R.A."/>
            <person name="Evans C.A."/>
            <person name="Gocayne J.D."/>
            <person name="Amanatides P.G."/>
            <person name="Scherer S.E."/>
            <person name="Li P.W."/>
            <person name="Hoskins R.A."/>
            <person name="Galle R.F."/>
            <person name="George R.A."/>
            <person name="Lewis S.E."/>
            <person name="Richards S."/>
            <person name="Ashburner M."/>
            <person name="Henderson S.N."/>
            <person name="Sutton G.G."/>
            <person name="Wortman J.R."/>
            <person name="Yandell M.D."/>
            <person name="Zhang Q."/>
            <person name="Chen L.X."/>
            <person name="Brandon R.C."/>
            <person name="Rogers Y.-H.C."/>
            <person name="Blazej R.G."/>
            <person name="Champe M."/>
            <person name="Pfeiffer B.D."/>
            <person name="Wan K.H."/>
            <person name="Doyle C."/>
            <person name="Baxter E.G."/>
            <person name="Helt G."/>
            <person name="Nelson C.R."/>
            <person name="Miklos G.L.G."/>
            <person name="Abril J.F."/>
            <person name="Agbayani A."/>
            <person name="An H.-J."/>
            <person name="Andrews-Pfannkoch C."/>
            <person name="Baldwin D."/>
            <person name="Ballew R.M."/>
            <person name="Basu A."/>
            <person name="Baxendale J."/>
            <person name="Bayraktaroglu L."/>
            <person name="Beasley E.M."/>
            <person name="Beeson K.Y."/>
            <person name="Benos P.V."/>
            <person name="Berman B.P."/>
            <person name="Bhandari D."/>
            <person name="Bolshakov S."/>
            <person name="Borkova D."/>
            <person name="Botchan M.R."/>
            <person name="Bouck J."/>
            <person name="Brokstein P."/>
            <person name="Brottier P."/>
            <person name="Burtis K.C."/>
            <person name="Busam D.A."/>
            <person name="Butler H."/>
            <person name="Cadieu E."/>
            <person name="Center A."/>
            <person name="Chandra I."/>
            <person name="Cherry J.M."/>
            <person name="Cawley S."/>
            <person name="Dahlke C."/>
            <person name="Davenport L.B."/>
            <person name="Davies P."/>
            <person name="de Pablos B."/>
            <person name="Delcher A."/>
            <person name="Deng Z."/>
            <person name="Mays A.D."/>
            <person name="Dew I."/>
            <person name="Dietz S.M."/>
            <person name="Dodson K."/>
            <person name="Doup L.E."/>
            <person name="Downes M."/>
            <person name="Dugan-Rocha S."/>
            <person name="Dunkov B.C."/>
            <person name="Dunn P."/>
            <person name="Durbin K.J."/>
            <person name="Evangelista C.C."/>
            <person name="Ferraz C."/>
            <person name="Ferriera S."/>
            <person name="Fleischmann W."/>
            <person name="Fosler C."/>
            <person name="Gabrielian A.E."/>
            <person name="Garg N.S."/>
            <person name="Gelbart W.M."/>
            <person name="Glasser K."/>
            <person name="Glodek A."/>
            <person name="Gong F."/>
            <person name="Gorrell J.H."/>
            <person name="Gu Z."/>
            <person name="Guan P."/>
            <person name="Harris M."/>
            <person name="Harris N.L."/>
            <person name="Harvey D.A."/>
            <person name="Heiman T.J."/>
            <person name="Hernandez J.R."/>
            <person name="Houck J."/>
            <person name="Hostin D."/>
            <person name="Houston K.A."/>
            <person name="Howland T.J."/>
            <person name="Wei M.-H."/>
            <person name="Ibegwam C."/>
            <person name="Jalali M."/>
            <person name="Kalush F."/>
            <person name="Karpen G.H."/>
            <person name="Ke Z."/>
            <person name="Kennison J.A."/>
            <person name="Ketchum K.A."/>
            <person name="Kimmel B.E."/>
            <person name="Kodira C.D."/>
            <person name="Kraft C.L."/>
            <person name="Kravitz S."/>
            <person name="Kulp D."/>
            <person name="Lai Z."/>
            <person name="Lasko P."/>
            <person name="Lei Y."/>
            <person name="Levitsky A.A."/>
            <person name="Li J.H."/>
            <person name="Li Z."/>
            <person name="Liang Y."/>
            <person name="Lin X."/>
            <person name="Liu X."/>
            <person name="Mattei B."/>
            <person name="McIntosh T.C."/>
            <person name="McLeod M.P."/>
            <person name="McPherson D."/>
            <person name="Merkulov G."/>
            <person name="Milshina N.V."/>
            <person name="Mobarry C."/>
            <person name="Morris J."/>
            <person name="Moshrefi A."/>
            <person name="Mount S.M."/>
            <person name="Moy M."/>
            <person name="Murphy B."/>
            <person name="Murphy L."/>
            <person name="Muzny D.M."/>
            <person name="Nelson D.L."/>
            <person name="Nelson D.R."/>
            <person name="Nelson K.A."/>
            <person name="Nixon K."/>
            <person name="Nusskern D.R."/>
            <person name="Pacleb J.M."/>
            <person name="Palazzolo M."/>
            <person name="Pittman G.S."/>
            <person name="Pan S."/>
            <person name="Pollard J."/>
            <person name="Puri V."/>
            <person name="Reese M.G."/>
            <person name="Reinert K."/>
            <person name="Remington K."/>
            <person name="Saunders R.D.C."/>
            <person name="Scheeler F."/>
            <person name="Shen H."/>
            <person name="Shue B.C."/>
            <person name="Siden-Kiamos I."/>
            <person name="Simpson M."/>
            <person name="Skupski M.P."/>
            <person name="Smith T.J."/>
            <person name="Spier E."/>
            <person name="Spradling A.C."/>
            <person name="Stapleton M."/>
            <person name="Strong R."/>
            <person name="Sun E."/>
            <person name="Svirskas R."/>
            <person name="Tector C."/>
            <person name="Turner R."/>
            <person name="Venter E."/>
            <person name="Wang A.H."/>
            <person name="Wang X."/>
            <person name="Wang Z.-Y."/>
            <person name="Wassarman D.A."/>
            <person name="Weinstock G.M."/>
            <person name="Weissenbach J."/>
            <person name="Williams S.M."/>
            <person name="Woodage T."/>
            <person name="Worley K.C."/>
            <person name="Wu D."/>
            <person name="Yang S."/>
            <person name="Yao Q.A."/>
            <person name="Ye J."/>
            <person name="Yeh R.-F."/>
            <person name="Zaveri J.S."/>
            <person name="Zhan M."/>
            <person name="Zhang G."/>
            <person name="Zhao Q."/>
            <person name="Zheng L."/>
            <person name="Zheng X.H."/>
            <person name="Zhong F.N."/>
            <person name="Zhong W."/>
            <person name="Zhou X."/>
            <person name="Zhu S.C."/>
            <person name="Zhu X."/>
            <person name="Smith H.O."/>
            <person name="Gibbs R.A."/>
            <person name="Myers E.W."/>
            <person name="Rubin G.M."/>
            <person name="Venter J.C."/>
        </authorList>
    </citation>
    <scope>NUCLEOTIDE SEQUENCE [LARGE SCALE GENOMIC DNA]</scope>
    <source>
        <strain>Berkeley</strain>
    </source>
</reference>
<reference key="3">
    <citation type="journal article" date="2002" name="Genome Biol.">
        <title>Annotation of the Drosophila melanogaster euchromatic genome: a systematic review.</title>
        <authorList>
            <person name="Misra S."/>
            <person name="Crosby M.A."/>
            <person name="Mungall C.J."/>
            <person name="Matthews B.B."/>
            <person name="Campbell K.S."/>
            <person name="Hradecky P."/>
            <person name="Huang Y."/>
            <person name="Kaminker J.S."/>
            <person name="Millburn G.H."/>
            <person name="Prochnik S.E."/>
            <person name="Smith C.D."/>
            <person name="Tupy J.L."/>
            <person name="Whitfield E.J."/>
            <person name="Bayraktaroglu L."/>
            <person name="Berman B.P."/>
            <person name="Bettencourt B.R."/>
            <person name="Celniker S.E."/>
            <person name="de Grey A.D.N.J."/>
            <person name="Drysdale R.A."/>
            <person name="Harris N.L."/>
            <person name="Richter J."/>
            <person name="Russo S."/>
            <person name="Schroeder A.J."/>
            <person name="Shu S.Q."/>
            <person name="Stapleton M."/>
            <person name="Yamada C."/>
            <person name="Ashburner M."/>
            <person name="Gelbart W.M."/>
            <person name="Rubin G.M."/>
            <person name="Lewis S.E."/>
        </authorList>
    </citation>
    <scope>GENOME REANNOTATION</scope>
    <scope>ALTERNATIVE SPLICING</scope>
    <source>
        <strain>Berkeley</strain>
    </source>
</reference>
<reference key="4">
    <citation type="submission" date="2005-08" db="EMBL/GenBank/DDBJ databases">
        <authorList>
            <person name="Stapleton M."/>
            <person name="Carlson J.W."/>
            <person name="Chavez C."/>
            <person name="Frise E."/>
            <person name="George R.A."/>
            <person name="Pacleb J.M."/>
            <person name="Park S."/>
            <person name="Wan K.H."/>
            <person name="Yu C."/>
            <person name="Celniker S.E."/>
        </authorList>
    </citation>
    <scope>NUCLEOTIDE SEQUENCE [LARGE SCALE MRNA] (ISOFORM 3)</scope>
    <source>
        <strain>Berkeley</strain>
    </source>
</reference>
<reference key="5">
    <citation type="journal article" date="2002" name="Development">
        <title>Different mechanisms initiate and maintain wingless expression in the Drosophila wing hinge.</title>
        <authorList>
            <person name="Rodriguez Dd Ddel A."/>
            <person name="Terriente J."/>
            <person name="Galindo M.I."/>
            <person name="Couso J.P."/>
            <person name="Diaz-Benjumea F.J."/>
        </authorList>
    </citation>
    <scope>FUNCTION</scope>
    <scope>TISSUE SPECIFICITY</scope>
</reference>
<reference key="6">
    <citation type="journal article" date="2007" name="Development">
        <title>Nab controls the activity of the zinc-finger transcription factors Squeeze and Rotund in Drosophila development.</title>
        <authorList>
            <person name="Terriente Felix J."/>
            <person name="Magarinos M."/>
            <person name="Diaz-Benjumea F.J."/>
        </authorList>
    </citation>
    <scope>FUNCTION</scope>
    <scope>TISSUE SPECIFICITY</scope>
    <scope>INTERACTION WITH NAB</scope>
</reference>
<reference key="7">
    <citation type="journal article" date="2008" name="Dev. Biol.">
        <title>The Drosophila gene zfh2 is required to establish proximal-distal domains in the wing disc.</title>
        <authorList>
            <person name="Terriente J."/>
            <person name="Perea D."/>
            <person name="Suzanne M."/>
            <person name="Diaz-Benjumea F.J."/>
        </authorList>
    </citation>
    <scope>FUNCTION</scope>
</reference>
<reference key="8">
    <citation type="journal article" date="2008" name="Genetics">
        <title>Basolateral junctions utilize warts signaling to control epithelial-mesenchymal transition and proliferation crucial for migration and invasion of Drosophila ovarian epithelial cells.</title>
        <authorList>
            <person name="Zhao M."/>
            <person name="Szafranski P."/>
            <person name="Hall C.A."/>
            <person name="Goode S."/>
        </authorList>
    </citation>
    <scope>FUNCTION</scope>
</reference>
<proteinExistence type="evidence at protein level"/>
<gene>
    <name evidence="11" type="primary">rn</name>
    <name type="synonym">roe</name>
    <name evidence="11" type="ORF">CG32466</name>
</gene>
<evidence type="ECO:0000255" key="1">
    <source>
        <dbReference type="PROSITE-ProRule" id="PRU00042"/>
    </source>
</evidence>
<evidence type="ECO:0000256" key="2">
    <source>
        <dbReference type="SAM" id="MobiDB-lite"/>
    </source>
</evidence>
<evidence type="ECO:0000269" key="3">
    <source>
    </source>
</evidence>
<evidence type="ECO:0000269" key="4">
    <source>
    </source>
</evidence>
<evidence type="ECO:0000269" key="5">
    <source>
    </source>
</evidence>
<evidence type="ECO:0000269" key="6">
    <source>
    </source>
</evidence>
<evidence type="ECO:0000269" key="7">
    <source>
    </source>
</evidence>
<evidence type="ECO:0000303" key="8">
    <source>
    </source>
</evidence>
<evidence type="ECO:0000303" key="9">
    <source ref="4"/>
</evidence>
<evidence type="ECO:0000305" key="10"/>
<evidence type="ECO:0000312" key="11">
    <source>
        <dbReference type="FlyBase" id="FBgn0267337"/>
    </source>
</evidence>
<accession>Q9VI93</accession>
<accession>Q4V6Z5</accession>
<accession>Q8WRV3</accession>
<accession>Q9VI90</accession>
<feature type="chain" id="PRO_0000372664" description="Zinc finger protein rotund">
    <location>
        <begin position="1"/>
        <end position="946"/>
    </location>
</feature>
<feature type="zinc finger region" description="C2H2-type 1" evidence="1">
    <location>
        <begin position="488"/>
        <end position="510"/>
    </location>
</feature>
<feature type="zinc finger region" description="C2H2-type 2" evidence="1">
    <location>
        <begin position="517"/>
        <end position="539"/>
    </location>
</feature>
<feature type="zinc finger region" description="C2H2-type 3" evidence="1">
    <location>
        <begin position="545"/>
        <end position="567"/>
    </location>
</feature>
<feature type="zinc finger region" description="C2H2-type 4" evidence="1">
    <location>
        <begin position="573"/>
        <end position="597"/>
    </location>
</feature>
<feature type="zinc finger region" description="C2H2-type 5" evidence="1">
    <location>
        <begin position="603"/>
        <end position="625"/>
    </location>
</feature>
<feature type="zinc finger region" description="C2H2-type 6" evidence="1">
    <location>
        <begin position="634"/>
        <end position="656"/>
    </location>
</feature>
<feature type="region of interest" description="Disordered" evidence="2">
    <location>
        <begin position="10"/>
        <end position="30"/>
    </location>
</feature>
<feature type="region of interest" description="Disordered" evidence="2">
    <location>
        <begin position="156"/>
        <end position="269"/>
    </location>
</feature>
<feature type="region of interest" description="Disordered" evidence="2">
    <location>
        <begin position="683"/>
        <end position="853"/>
    </location>
</feature>
<feature type="compositionally biased region" description="Polar residues" evidence="2">
    <location>
        <begin position="161"/>
        <end position="176"/>
    </location>
</feature>
<feature type="compositionally biased region" description="Low complexity" evidence="2">
    <location>
        <begin position="177"/>
        <end position="188"/>
    </location>
</feature>
<feature type="compositionally biased region" description="Polar residues" evidence="2">
    <location>
        <begin position="198"/>
        <end position="230"/>
    </location>
</feature>
<feature type="compositionally biased region" description="Polar residues" evidence="2">
    <location>
        <begin position="242"/>
        <end position="269"/>
    </location>
</feature>
<feature type="compositionally biased region" description="Low complexity" evidence="2">
    <location>
        <begin position="739"/>
        <end position="762"/>
    </location>
</feature>
<feature type="compositionally biased region" description="Low complexity" evidence="2">
    <location>
        <begin position="770"/>
        <end position="790"/>
    </location>
</feature>
<feature type="compositionally biased region" description="Polar residues" evidence="2">
    <location>
        <begin position="813"/>
        <end position="822"/>
    </location>
</feature>
<feature type="compositionally biased region" description="Basic and acidic residues" evidence="2">
    <location>
        <begin position="828"/>
        <end position="841"/>
    </location>
</feature>
<feature type="splice variant" id="VSP_037179" description="In isoform roe." evidence="8">
    <original>MIMHGTWYKGPQLAHHPHSNPHNSSHGHSDYHQFRSYPSFVVTPYHDGHVQGPATPTPCTAPPTPCNGPVPVSVPVSIPVCHTGGQGSPVIVESSFAIAAAAAAAAAAVAVGGSSATPLLPSPPIKIEQVFGEPSSLGAVVEDYALGLDCPVEHTFRKPHNNNGYSWSTGNNNEVVSHSSNGHTNNHPTTPPTPPNEASATQATSVSAINLNQAQPASQTRSNFGSSIKSPPSEPDAVTAATCKSQENNSGQNPTPNSLSDHNPAHNLNSNSTAAAVAAAAAAAAAANMPIGGVQGQNPTQGLVHWMSAVMAEHMTGQTHHDPGAVGMHYMWNGNVDHAKDISDYNLWPPTPRSHQHASEHHPMSLKQEYEAKMNDHHHNNLQKGHFLDDNRLEHHAVTGQGGLGLGASNGVGGGGGGASVVGNSSLGASSHHAVAAAHHHNQAVAAASAAALLVVPQPINASKMGGPGGVSSVAGGHATGGGSGRKYQCKMCPQ</original>
    <variation>MEGRLIEYRPIGGGLDYHHNSPLIGEIPPAGGDYSHAVHRSIDHLRNSLNERVALGPLSVFSNTADLRNSVLSYSQQPHQQPQPPQQQQQQQQQQHHQQQQHQYQLVPEPKPSITNLESSVASSAVSGSVASGQKHVNDAVVSSSSGSSSTAGPAPTGSTRGRKSRIYPNPNQHIIVTSNSVDNGGIRMQNATLNERNSQNSSAGAAGVGNVTTAAGSGNGISSSTSSPHHMTQLDVKDTK</variation>
    <location>
        <begin position="1"/>
        <end position="495"/>
    </location>
</feature>
<feature type="splice variant" id="VSP_037180" description="In isoform 3." evidence="9">
    <location>
        <begin position="274"/>
        <end position="677"/>
    </location>
</feature>
<feature type="sequence conflict" description="In Ref. 1; AAL59599." evidence="10" ref="1">
    <location>
        <position position="278"/>
    </location>
</feature>
<feature type="sequence conflict" description="In Ref. 1; AAL59599." evidence="10" ref="1">
    <original>G</original>
    <variation>R</variation>
    <location>
        <position position="469"/>
    </location>
</feature>
<feature type="sequence conflict" description="In Ref. 1; AAL59599." evidence="10" ref="1">
    <original>G</original>
    <variation>R</variation>
    <location>
        <position position="481"/>
    </location>
</feature>
<feature type="sequence conflict" description="In Ref. 4; AAY51555." evidence="10" ref="4">
    <original>S</original>
    <variation>I</variation>
    <location>
        <position position="938"/>
    </location>
</feature>
<dbReference type="EMBL" id="AF395904">
    <property type="protein sequence ID" value="AAL59598.1"/>
    <property type="molecule type" value="mRNA"/>
</dbReference>
<dbReference type="EMBL" id="AF395905">
    <property type="protein sequence ID" value="AAL59599.1"/>
    <property type="status" value="ALT_INIT"/>
    <property type="molecule type" value="mRNA"/>
</dbReference>
<dbReference type="EMBL" id="AE014297">
    <property type="protein sequence ID" value="AAF54032.3"/>
    <property type="molecule type" value="Genomic_DNA"/>
</dbReference>
<dbReference type="EMBL" id="AE014297">
    <property type="protein sequence ID" value="AAS65102.1"/>
    <property type="molecule type" value="Genomic_DNA"/>
</dbReference>
<dbReference type="EMBL" id="BT022161">
    <property type="protein sequence ID" value="AAY51555.1"/>
    <property type="molecule type" value="mRNA"/>
</dbReference>
<dbReference type="RefSeq" id="NP_649715.2">
    <molecule id="Q9VI93-1"/>
    <property type="nucleotide sequence ID" value="NM_141458.3"/>
</dbReference>
<dbReference type="RefSeq" id="NP_996178.1">
    <molecule id="Q9VI93-2"/>
    <property type="nucleotide sequence ID" value="NM_206456.2"/>
</dbReference>
<dbReference type="SMR" id="Q9VI93"/>
<dbReference type="BioGRID" id="66073">
    <property type="interactions" value="14"/>
</dbReference>
<dbReference type="FunCoup" id="Q9VI93">
    <property type="interactions" value="144"/>
</dbReference>
<dbReference type="IntAct" id="Q9VI93">
    <property type="interactions" value="8"/>
</dbReference>
<dbReference type="STRING" id="7227.FBpp0303173"/>
<dbReference type="GlyGen" id="Q9VI93">
    <property type="glycosylation" value="3 sites"/>
</dbReference>
<dbReference type="PaxDb" id="7227-FBpp0289745"/>
<dbReference type="DNASU" id="40879"/>
<dbReference type="EnsemblMetazoa" id="FBtr0299637">
    <molecule id="Q9VI93-2"/>
    <property type="protein sequence ID" value="FBpp0288912"/>
    <property type="gene ID" value="FBgn0267337"/>
</dbReference>
<dbReference type="EnsemblMetazoa" id="FBtr0300518">
    <molecule id="Q9VI93-1"/>
    <property type="protein sequence ID" value="FBpp0289745"/>
    <property type="gene ID" value="FBgn0267337"/>
</dbReference>
<dbReference type="GeneID" id="40879"/>
<dbReference type="KEGG" id="dme:Dmel_CG42277"/>
<dbReference type="AGR" id="FB:FBgn0267337"/>
<dbReference type="CTD" id="109542"/>
<dbReference type="FlyBase" id="FBgn0267337">
    <property type="gene designation" value="rn"/>
</dbReference>
<dbReference type="VEuPathDB" id="VectorBase:FBgn0267337"/>
<dbReference type="eggNOG" id="KOG1721">
    <property type="taxonomic scope" value="Eukaryota"/>
</dbReference>
<dbReference type="HOGENOM" id="CLU_309561_0_0_1"/>
<dbReference type="InParanoid" id="Q9VI93"/>
<dbReference type="OMA" id="WQYVREI"/>
<dbReference type="OrthoDB" id="6077919at2759"/>
<dbReference type="PhylomeDB" id="Q9VI93"/>
<dbReference type="BioGRID-ORCS" id="40879">
    <property type="hits" value="0 hits in 1 CRISPR screen"/>
</dbReference>
<dbReference type="GenomeRNAi" id="40879"/>
<dbReference type="PRO" id="PR:Q9VI93"/>
<dbReference type="Proteomes" id="UP000000803">
    <property type="component" value="Chromosome 3R"/>
</dbReference>
<dbReference type="Bgee" id="FBgn0267337">
    <property type="expression patterns" value="Expressed in leg muscle motor neuron in post-embryonic organism and 63 other cell types or tissues"/>
</dbReference>
<dbReference type="ExpressionAtlas" id="Q9VI93">
    <property type="expression patterns" value="baseline and differential"/>
</dbReference>
<dbReference type="GO" id="GO:0005634">
    <property type="term" value="C:nucleus"/>
    <property type="evidence" value="ECO:0000314"/>
    <property type="project" value="FlyBase"/>
</dbReference>
<dbReference type="GO" id="GO:0000981">
    <property type="term" value="F:DNA-binding transcription factor activity, RNA polymerase II-specific"/>
    <property type="evidence" value="ECO:0000314"/>
    <property type="project" value="FlyBase"/>
</dbReference>
<dbReference type="GO" id="GO:0000978">
    <property type="term" value="F:RNA polymerase II cis-regulatory region sequence-specific DNA binding"/>
    <property type="evidence" value="ECO:0000318"/>
    <property type="project" value="GO_Central"/>
</dbReference>
<dbReference type="GO" id="GO:0000977">
    <property type="term" value="F:RNA polymerase II transcription regulatory region sequence-specific DNA binding"/>
    <property type="evidence" value="ECO:0000314"/>
    <property type="project" value="FlyBase"/>
</dbReference>
<dbReference type="GO" id="GO:0008270">
    <property type="term" value="F:zinc ion binding"/>
    <property type="evidence" value="ECO:0007669"/>
    <property type="project" value="UniProtKB-KW"/>
</dbReference>
<dbReference type="GO" id="GO:0001708">
    <property type="term" value="P:cell fate specification"/>
    <property type="evidence" value="ECO:0000315"/>
    <property type="project" value="FlyBase"/>
</dbReference>
<dbReference type="GO" id="GO:0022416">
    <property type="term" value="P:chaeta development"/>
    <property type="evidence" value="ECO:0000315"/>
    <property type="project" value="FlyBase"/>
</dbReference>
<dbReference type="GO" id="GO:0048749">
    <property type="term" value="P:compound eye development"/>
    <property type="evidence" value="ECO:0000315"/>
    <property type="project" value="FlyBase"/>
</dbReference>
<dbReference type="GO" id="GO:0007480">
    <property type="term" value="P:imaginal disc-derived leg morphogenesis"/>
    <property type="evidence" value="ECO:0000315"/>
    <property type="project" value="FlyBase"/>
</dbReference>
<dbReference type="GO" id="GO:0045892">
    <property type="term" value="P:negative regulation of DNA-templated transcription"/>
    <property type="evidence" value="ECO:0000315"/>
    <property type="project" value="FlyBase"/>
</dbReference>
<dbReference type="GO" id="GO:0000122">
    <property type="term" value="P:negative regulation of transcription by RNA polymerase II"/>
    <property type="evidence" value="ECO:0000315"/>
    <property type="project" value="FlyBase"/>
</dbReference>
<dbReference type="GO" id="GO:0006357">
    <property type="term" value="P:regulation of transcription by RNA polymerase II"/>
    <property type="evidence" value="ECO:0000318"/>
    <property type="project" value="GO_Central"/>
</dbReference>
<dbReference type="FunFam" id="3.30.160.60:FF:000158">
    <property type="entry name" value="Zinc finger protein 362"/>
    <property type="match status" value="1"/>
</dbReference>
<dbReference type="FunFam" id="3.30.160.60:FF:000648">
    <property type="entry name" value="Zinc finger protein rotund"/>
    <property type="match status" value="1"/>
</dbReference>
<dbReference type="FunFam" id="3.30.160.60:FF:001172">
    <property type="entry name" value="Zinc finger protein rotund"/>
    <property type="match status" value="1"/>
</dbReference>
<dbReference type="FunFam" id="3.30.160.60:FF:001678">
    <property type="entry name" value="Zinc finger protein rotund"/>
    <property type="match status" value="1"/>
</dbReference>
<dbReference type="Gene3D" id="3.30.160.60">
    <property type="entry name" value="Classic Zinc Finger"/>
    <property type="match status" value="5"/>
</dbReference>
<dbReference type="InterPro" id="IPR036236">
    <property type="entry name" value="Znf_C2H2_sf"/>
</dbReference>
<dbReference type="InterPro" id="IPR013087">
    <property type="entry name" value="Znf_C2H2_type"/>
</dbReference>
<dbReference type="PANTHER" id="PTHR14003">
    <property type="entry name" value="TRANSCRIPTIONAL REPRESSOR PROTEIN YY"/>
    <property type="match status" value="1"/>
</dbReference>
<dbReference type="PANTHER" id="PTHR14003:SF23">
    <property type="entry name" value="ZINC FINGER PROTEIN 143"/>
    <property type="match status" value="1"/>
</dbReference>
<dbReference type="Pfam" id="PF00096">
    <property type="entry name" value="zf-C2H2"/>
    <property type="match status" value="4"/>
</dbReference>
<dbReference type="SMART" id="SM00355">
    <property type="entry name" value="ZnF_C2H2"/>
    <property type="match status" value="6"/>
</dbReference>
<dbReference type="SUPFAM" id="SSF57667">
    <property type="entry name" value="beta-beta-alpha zinc fingers"/>
    <property type="match status" value="4"/>
</dbReference>
<dbReference type="PROSITE" id="PS00028">
    <property type="entry name" value="ZINC_FINGER_C2H2_1"/>
    <property type="match status" value="6"/>
</dbReference>
<dbReference type="PROSITE" id="PS50157">
    <property type="entry name" value="ZINC_FINGER_C2H2_2"/>
    <property type="match status" value="6"/>
</dbReference>
<comment type="function">
    <text evidence="3 4 5 6 7">Transcription factor involved in imaginal disks development. Isoform rn is required in the wings, antenna, haltere, proboscis and legs disks, while isoform roe is required in the eye disk. Together with nab corepressor, it is involved in the initiation and maintenance of wingless (wg) expression in the wing hinge, by limiting the expression of wg to this compartment. Also required for the epithelial-mesenchymal transition branch of basolateral junctions signaling.</text>
</comment>
<comment type="subunit">
    <text evidence="5">Interacts with nab; which acts as a corepressor.</text>
</comment>
<comment type="subcellular location">
    <subcellularLocation>
        <location evidence="10">Nucleus</location>
    </subcellularLocation>
</comment>
<comment type="alternative products">
    <event type="alternative promoter"/>
    <event type="alternative splicing"/>
    <isoform>
        <id>Q9VI93-1</id>
        <name>rn</name>
        <name>E</name>
        <name>Rotund</name>
        <sequence type="displayed"/>
    </isoform>
    <isoform>
        <id>Q9VI93-2</id>
        <name>roe</name>
        <name>C</name>
        <name>Roughened eye</name>
        <sequence type="described" ref="VSP_037179"/>
    </isoform>
    <isoform>
        <id>Q9VI93-3</id>
        <name>3</name>
        <sequence type="described" ref="VSP_037180"/>
    </isoform>
</comment>
<comment type="tissue specificity">
    <text evidence="3 4 5">Isoform rn and isoform roe are expressed in non-overlapping domains in the larval imaginal disks. Isoform rn is first expressed during the early third larval instar in the leg, wing, haltere and antennal part of the eye-antennal imaginal disk. It is observed as a ring in the leg and antenna disks and in the presumptive wing pouch and capitellum of wing and haltere disks respectively. In wing disk it is expressed in 3 concentric domains in the wing pouch. In late third instar, expression of isoform rn in the leg disk is no longer evident, but is maintained in the other disks. Isoform roe appears in the third instar and is confined to the eye part of the eye-antennal imaginal disk in a band of 4-6 cells at the morphogenetic furrow. There is no evidence of roe expression in other imaginal disks.</text>
</comment>
<comment type="miscellaneous">
    <molecule>Isoform roe</molecule>
    <text evidence="10">Produced by alternative promoter usage.</text>
</comment>
<comment type="similarity">
    <text evidence="10">Belongs to the krueppel C2H2-type zinc-finger protein family.</text>
</comment>
<comment type="sequence caution" evidence="10">
    <conflict type="erroneous initiation">
        <sequence resource="EMBL-CDS" id="AAL59599"/>
    </conflict>
</comment>
<protein>
    <recommendedName>
        <fullName>Zinc finger protein rotund</fullName>
    </recommendedName>
    <alternativeName>
        <fullName>Zinc finger protein roughened eye</fullName>
    </alternativeName>
</protein>
<sequence length="946" mass="100948">MIMHGTWYKGPQLAHHPHSNPHNSSHGHSDYHQFRSYPSFVVTPYHDGHVQGPATPTPCTAPPTPCNGPVPVSVPVSIPVCHTGGQGSPVIVESSFAIAAAAAAAAAAVAVGGSSATPLLPSPPIKIEQVFGEPSSLGAVVEDYALGLDCPVEHTFRKPHNNNGYSWSTGNNNEVVSHSSNGHTNNHPTTPPTPPNEASATQATSVSAINLNQAQPASQTRSNFGSSIKSPPSEPDAVTAATCKSQENNSGQNPTPNSLSDHNPAHNLNSNSTAAAVAAAAAAAAAANMPIGGVQGQNPTQGLVHWMSAVMAEHMTGQTHHDPGAVGMHYMWNGNVDHAKDISDYNLWPPTPRSHQHASEHHPMSLKQEYEAKMNDHHHNNLQKGHFLDDNRLEHHAVTGQGGLGLGASNGVGGGGGGASVVGNSSLGASSHHAVAAAHHHNQAVAAASAAALLVVPQPINASKMGGPGGVSSVAGGHATGGGSGRKYQCKMCPQIFSSKADLQLHTQIHMREAKPYKCTQCSKAFANSSYLSQHTRIHLGIKPYRCEICQRKFTQLSHLQQHIRTHTGDKPYKCRHPGCQKAFSQLSNLQSHSRCHQTDKPFKCNSCYKCFSDEPSLLEHIPKHKESKHLKTHICQYCGKSYTQETYLTKHMQKHAERTDKRPPIVPGSAAAIAAAAAAAAGGSANPANGPPPPPNPAQHQRNNLGLPPVSIAPSDNGYWPKVSPDSAAAANAMEVMHQQQQQQQQQQQQQQQQQQQQQQQAHHHHPQHGVPPQQHVPPQQQQQQQQQQQHHHPQQQPPPQHSMEAHYAQPTAPNGSQSNGHGAELQPHHRMPDPVREDIASTPSAVGPYDAASITKTTSNSAFTPINSMPPHLNSLSHHPMAQRPYLYDAISFPNKNVNQNNANAFPNQLISLHQIRNYAHQPAGLMAGEHLLGVSVGPGKDKG</sequence>
<organism>
    <name type="scientific">Drosophila melanogaster</name>
    <name type="common">Fruit fly</name>
    <dbReference type="NCBI Taxonomy" id="7227"/>
    <lineage>
        <taxon>Eukaryota</taxon>
        <taxon>Metazoa</taxon>
        <taxon>Ecdysozoa</taxon>
        <taxon>Arthropoda</taxon>
        <taxon>Hexapoda</taxon>
        <taxon>Insecta</taxon>
        <taxon>Pterygota</taxon>
        <taxon>Neoptera</taxon>
        <taxon>Endopterygota</taxon>
        <taxon>Diptera</taxon>
        <taxon>Brachycera</taxon>
        <taxon>Muscomorpha</taxon>
        <taxon>Ephydroidea</taxon>
        <taxon>Drosophilidae</taxon>
        <taxon>Drosophila</taxon>
        <taxon>Sophophora</taxon>
    </lineage>
</organism>
<keyword id="KW-0877">Alternative promoter usage</keyword>
<keyword id="KW-0025">Alternative splicing</keyword>
<keyword id="KW-0479">Metal-binding</keyword>
<keyword id="KW-0539">Nucleus</keyword>
<keyword id="KW-1185">Reference proteome</keyword>
<keyword id="KW-0677">Repeat</keyword>
<keyword id="KW-0804">Transcription</keyword>
<keyword id="KW-0805">Transcription regulation</keyword>
<keyword id="KW-0862">Zinc</keyword>
<keyword id="KW-0863">Zinc-finger</keyword>
<name>RN_DROME</name>